<keyword id="KW-0002">3D-structure</keyword>
<keyword id="KW-0963">Cytoplasm</keyword>
<keyword id="KW-0903">Direct protein sequencing</keyword>
<keyword id="KW-0238">DNA-binding</keyword>
<keyword id="KW-0488">Methylation</keyword>
<keyword id="KW-1185">Reference proteome</keyword>
<sequence length="64" mass="7280">MATVKFKYKGEEKEVDISKIKKVWRVGKMISFTYDEGGGKTGRGAVSEKDAPKELLQMLEKQKK</sequence>
<proteinExistence type="evidence at protein level"/>
<name>DN7D_SACS2</name>
<reference key="1">
    <citation type="journal article" date="2001" name="Proc. Natl. Acad. Sci. U.S.A.">
        <title>The complete genome of the crenarchaeon Sulfolobus solfataricus P2.</title>
        <authorList>
            <person name="She Q."/>
            <person name="Singh R.K."/>
            <person name="Confalonieri F."/>
            <person name="Zivanovic Y."/>
            <person name="Allard G."/>
            <person name="Awayez M.J."/>
            <person name="Chan-Weiher C.C.-Y."/>
            <person name="Clausen I.G."/>
            <person name="Curtis B.A."/>
            <person name="De Moors A."/>
            <person name="Erauso G."/>
            <person name="Fletcher C."/>
            <person name="Gordon P.M.K."/>
            <person name="Heikamp-de Jong I."/>
            <person name="Jeffries A.C."/>
            <person name="Kozera C.J."/>
            <person name="Medina N."/>
            <person name="Peng X."/>
            <person name="Thi-Ngoc H.P."/>
            <person name="Redder P."/>
            <person name="Schenk M.E."/>
            <person name="Theriault C."/>
            <person name="Tolstrup N."/>
            <person name="Charlebois R.L."/>
            <person name="Doolittle W.F."/>
            <person name="Duguet M."/>
            <person name="Gaasterland T."/>
            <person name="Garrett R.A."/>
            <person name="Ragan M.A."/>
            <person name="Sensen C.W."/>
            <person name="Van der Oost J."/>
        </authorList>
    </citation>
    <scope>NUCLEOTIDE SEQUENCE [LARGE SCALE GENOMIC DNA]</scope>
    <source>
        <strain>ATCC 35092 / DSM 1617 / JCM 11322 / P2</strain>
    </source>
</reference>
<reference key="2">
    <citation type="journal article" date="1988" name="Biochim. Biophys. Acta">
        <title>Isolation, characterization and microsequence analysis of a small basic methylated DNA-binding protein from the Archaebacterium, Sulfolobus solfataricus.</title>
        <authorList>
            <person name="Choli T."/>
            <person name="Henning P."/>
            <person name="Wittmann-Liebold B."/>
            <person name="Reinhardt R."/>
        </authorList>
    </citation>
    <scope>PROTEIN SEQUENCE OF 2-64</scope>
    <scope>DNA-BINDING</scope>
    <scope>SUBUNIT</scope>
    <scope>METHYLATION AT LYS-5; LYS-7; LYS-61; LYS-63 AND LYS-64</scope>
    <source>
        <strain>ATCC 35091 / DSM 1616 / IFO 15331 / JCM 8930 / P1</strain>
    </source>
</reference>
<reference key="3">
    <citation type="journal article" date="1998" name="FEBS Lett.">
        <title>Isolation and structure of repressor-like proteins from the archaeon Sulfolobus solfataricus.</title>
        <authorList>
            <person name="Oppermann U.C.T."/>
            <person name="Knapp S."/>
            <person name="Bonetto V."/>
            <person name="Ladenstein R."/>
            <person name="Joernvall H."/>
        </authorList>
    </citation>
    <scope>PROTEIN SEQUENCE OF 2-64</scope>
    <scope>METHYLATION AT LYS-5; LYS-7; LYS-61; LYS-63 AND LYS-64</scope>
    <scope>IDENTIFICATION BY MASS SPECTROMETRY</scope>
    <source>
        <strain>ATCC 35092 / DSM 1617 / JCM 11322 / P2</strain>
    </source>
</reference>
<reference key="4">
    <citation type="journal article" date="1995" name="FEBS Lett.">
        <title>An 8.5-kDa ribonuclease from the extreme thermophilic archaebacterium Sulfolobus solfataricus.</title>
        <authorList>
            <person name="Fusi P."/>
            <person name="Grisa M."/>
            <person name="Tedeschi G."/>
            <person name="Negri A."/>
            <person name="Guerritore A."/>
            <person name="Tortora P."/>
        </authorList>
    </citation>
    <scope>PROTEIN SEQUENCE OF 2-64</scope>
</reference>
<reference key="5">
    <citation type="journal article" date="1993" name="Eur. J. Biochem.">
        <title>Ribonucleases from the extreme thermophilic archaebacterium S. solfataricus.</title>
        <authorList>
            <person name="Fusi P."/>
            <person name="Tedeschi G."/>
            <person name="Aliverti A."/>
            <person name="Ronchi S."/>
            <person name="Tortora P."/>
            <person name="Guerritore A."/>
        </authorList>
    </citation>
    <scope>PROTEIN SEQUENCE OF 2-58</scope>
</reference>
<reference key="6">
    <citation type="journal article" date="1992" name="FEBS Lett.">
        <title>Isolation of a thermostable enzyme catalyzing disulfide bond formation from the archaebacterium Sulfolobus solfataricus.</title>
        <authorList>
            <person name="Guagliardi A."/>
            <person name="Cerchia L."/>
            <person name="De Rosa M."/>
            <person name="Rossi M."/>
            <person name="Bartolucci S."/>
        </authorList>
    </citation>
    <scope>PROTEIN SEQUENCE OF 2-13</scope>
</reference>
<reference key="7">
    <citation type="journal article" date="2002" name="J. Biol. Chem.">
        <title>Holliday junction resolution is modulated by archaeal chromatin components in vitro.</title>
        <authorList>
            <person name="Kvaratskhelia M."/>
            <person name="Wardleworth B.N."/>
            <person name="Bond C.S."/>
            <person name="Fogg J.M."/>
            <person name="Lilley D.M."/>
            <person name="White M.F."/>
        </authorList>
    </citation>
    <scope>FUNCTION</scope>
</reference>
<reference key="8">
    <citation type="journal article" date="2016" name="Sci. Rep.">
        <title>The archaeal '7 kDa DNA-binding' proteins: extended characterization of an old gifted family.</title>
        <authorList>
            <person name="Kalichuk V."/>
            <person name="Behar G."/>
            <person name="Renodon-Corniere A."/>
            <person name="Danovski G."/>
            <person name="Obal G."/>
            <person name="Barbet J."/>
            <person name="Mouratou B."/>
            <person name="Pecorari F."/>
        </authorList>
    </citation>
    <scope>DNA-BINDING</scope>
    <scope>BIOPHYSICOCHEMICAL PROPERTIES</scope>
    <scope>SUBUNIT</scope>
    <scope>SUBCELLULAR LOCATION</scope>
</reference>
<reference key="9">
    <citation type="journal article" date="1994" name="Nat. Struct. Biol.">
        <title>Solution structure and DNA-binding properties of a thermostable protein from the archaeon Sulfolobus solfataricus.</title>
        <authorList>
            <person name="Baumann H."/>
            <person name="Knapp S."/>
            <person name="Lundbaeck T."/>
            <person name="Ladenstein R."/>
            <person name="Haerd T."/>
        </authorList>
    </citation>
    <scope>STRUCTURE BY NMR</scope>
    <scope>DNA-BINDING</scope>
    <scope>SUBUNIT</scope>
    <source>
        <strain>ATCC 35092 / DSM 1617 / JCM 11322 / P2</strain>
    </source>
</reference>
<reference key="10">
    <citation type="journal article" date="1998" name="Nat. Struct. Biol.">
        <title>Architecture of nonspecific protein-DNA interactions in the Sso7d-DNA complex.</title>
        <authorList>
            <person name="Agback P."/>
            <person name="Baumann H."/>
            <person name="Knapp S."/>
            <person name="Ladenstein R."/>
            <person name="Haerd T."/>
        </authorList>
    </citation>
    <scope>STRUCTURE BY NMR</scope>
    <scope>DNA-BINDING</scope>
    <source>
        <strain>ATCC 35092 / DSM 1617 / JCM 11322 / P2</strain>
    </source>
</reference>
<reference key="11">
    <citation type="journal article" date="1998" name="Nat. Struct. Biol.">
        <title>The crystal structure of the hyperthermophile chromosomal protein Sso7d bound to DNA.</title>
        <authorList>
            <person name="Gao Y.G."/>
            <person name="Su S.Y."/>
            <person name="Robinson H."/>
            <person name="Padmanabhan S."/>
            <person name="Lim L."/>
            <person name="McCrary B.S."/>
            <person name="Edmondson S.P."/>
            <person name="Shriver J.W."/>
            <person name="Wang A.H."/>
        </authorList>
    </citation>
    <scope>X-RAY CRYSTALLOGRAPHY (2.0 ANGSTROMS)</scope>
</reference>
<comment type="function">
    <text evidence="1 2">Can constrain negative DNA supercoils. May be involved in maintaining the integrity of the genome at high temperature (By similarity). Stimulates the Holliday junction cleavage activity of Hjc (PubMed:11709558).</text>
</comment>
<comment type="biophysicochemical properties">
    <phDependence>
        <text evidence="4">Highly stable from pH 0 to pH 12.</text>
    </phDependence>
    <temperatureDependence>
        <text evidence="4">Hyperthermostable.</text>
    </temperatureDependence>
</comment>
<comment type="subunit">
    <text evidence="4 5 6">Monomer.</text>
</comment>
<comment type="subcellular location">
    <subcellularLocation>
        <location evidence="4">Cytoplasm</location>
    </subcellularLocation>
</comment>
<comment type="similarity">
    <text evidence="11">Belongs to the 7 kDa DNA-binding/endoribonuclease P2 family.</text>
</comment>
<comment type="sequence caution" evidence="11">
    <conflict type="erroneous initiation">
        <sequence resource="EMBL-CDS" id="AAK42679"/>
    </conflict>
    <text>Extended N-terminus.</text>
</comment>
<accession>P39476</accession>
<accession>P81550</accession>
<dbReference type="EMBL" id="AE006641">
    <property type="protein sequence ID" value="AAK42679.1"/>
    <property type="status" value="ALT_INIT"/>
    <property type="molecule type" value="Genomic_DNA"/>
</dbReference>
<dbReference type="PIR" id="H90427">
    <property type="entry name" value="H90427"/>
</dbReference>
<dbReference type="PIR" id="S69085">
    <property type="entry name" value="S69085"/>
</dbReference>
<dbReference type="RefSeq" id="WP_009990119.1">
    <property type="nucleotide sequence ID" value="NC_002754.1"/>
</dbReference>
<dbReference type="PDB" id="1BBX">
    <property type="method" value="NMR"/>
    <property type="chains" value="C/D=2-64"/>
</dbReference>
<dbReference type="PDB" id="1BNZ">
    <property type="method" value="X-ray"/>
    <property type="resolution" value="2.00 A"/>
    <property type="chains" value="A=1-64"/>
</dbReference>
<dbReference type="PDB" id="1C8C">
    <property type="method" value="X-ray"/>
    <property type="resolution" value="1.45 A"/>
    <property type="chains" value="A=1-64"/>
</dbReference>
<dbReference type="PDB" id="1JIC">
    <property type="method" value="NMR"/>
    <property type="chains" value="A=2-62"/>
</dbReference>
<dbReference type="PDB" id="5B02">
    <property type="method" value="X-ray"/>
    <property type="resolution" value="2.21 A"/>
    <property type="chains" value="A/B/C/D=1-64"/>
</dbReference>
<dbReference type="PDB" id="5B03">
    <property type="method" value="X-ray"/>
    <property type="resolution" value="2.60 A"/>
    <property type="chains" value="A/B/C/D=1-64"/>
</dbReference>
<dbReference type="PDB" id="5B0I">
    <property type="method" value="X-ray"/>
    <property type="resolution" value="2.26 A"/>
    <property type="chains" value="A/B/C/D=1-64"/>
</dbReference>
<dbReference type="PDB" id="5B0J">
    <property type="method" value="X-ray"/>
    <property type="resolution" value="2.50 A"/>
    <property type="chains" value="A/B/C/D=1-64"/>
</dbReference>
<dbReference type="PDB" id="5B0K">
    <property type="method" value="X-ray"/>
    <property type="resolution" value="2.75 A"/>
    <property type="chains" value="A/B/C/D=1-64"/>
</dbReference>
<dbReference type="PDB" id="5B0L">
    <property type="method" value="X-ray"/>
    <property type="resolution" value="2.80 A"/>
    <property type="chains" value="A/B/C/D/E/F/G/H=1-64"/>
</dbReference>
<dbReference type="PDB" id="5B0M">
    <property type="method" value="X-ray"/>
    <property type="resolution" value="3.05 A"/>
    <property type="chains" value="A/B/C/D/E/F/G/H=1-64"/>
</dbReference>
<dbReference type="PDB" id="5GWV">
    <property type="method" value="X-ray"/>
    <property type="resolution" value="2.40 A"/>
    <property type="chains" value="A/B/C/D=1-64"/>
</dbReference>
<dbReference type="PDB" id="5GWW">
    <property type="method" value="X-ray"/>
    <property type="resolution" value="2.30 A"/>
    <property type="chains" value="A/B/C/D=1-64"/>
</dbReference>
<dbReference type="PDB" id="5U1C">
    <property type="method" value="EM"/>
    <property type="resolution" value="3.90 A"/>
    <property type="chains" value="A/B/C/D=1-64"/>
</dbReference>
<dbReference type="PDB" id="6J8V">
    <property type="method" value="X-ray"/>
    <property type="resolution" value="2.23 A"/>
    <property type="chains" value="A/B/C/D=1-64"/>
</dbReference>
<dbReference type="PDB" id="6J8W">
    <property type="method" value="X-ray"/>
    <property type="resolution" value="2.35 A"/>
    <property type="chains" value="A/B/C/D=1-64"/>
</dbReference>
<dbReference type="PDB" id="6PUT">
    <property type="method" value="EM"/>
    <property type="resolution" value="2.90 A"/>
    <property type="chains" value="A/B/C/D=1-64"/>
</dbReference>
<dbReference type="PDB" id="6PUW">
    <property type="method" value="EM"/>
    <property type="resolution" value="2.90 A"/>
    <property type="chains" value="A/B/C/D=1-64"/>
</dbReference>
<dbReference type="PDB" id="6PUY">
    <property type="method" value="EM"/>
    <property type="resolution" value="2.80 A"/>
    <property type="chains" value="A/B/C/D=1-64"/>
</dbReference>
<dbReference type="PDB" id="6PUZ">
    <property type="method" value="EM"/>
    <property type="resolution" value="2.80 A"/>
    <property type="chains" value="A/B/C/D=1-64"/>
</dbReference>
<dbReference type="PDB" id="6V3K">
    <property type="method" value="EM"/>
    <property type="resolution" value="3.40 A"/>
    <property type="chains" value="A/B/C/D=1-64"/>
</dbReference>
<dbReference type="PDB" id="6VOY">
    <property type="method" value="EM"/>
    <property type="resolution" value="3.70 A"/>
    <property type="chains" value="A/B/C/D=1-64"/>
</dbReference>
<dbReference type="PDBsum" id="1BBX"/>
<dbReference type="PDBsum" id="1BNZ"/>
<dbReference type="PDBsum" id="1C8C"/>
<dbReference type="PDBsum" id="1JIC"/>
<dbReference type="PDBsum" id="5B02"/>
<dbReference type="PDBsum" id="5B03"/>
<dbReference type="PDBsum" id="5B0I"/>
<dbReference type="PDBsum" id="5B0J"/>
<dbReference type="PDBsum" id="5B0K"/>
<dbReference type="PDBsum" id="5B0L"/>
<dbReference type="PDBsum" id="5B0M"/>
<dbReference type="PDBsum" id="5GWV"/>
<dbReference type="PDBsum" id="5GWW"/>
<dbReference type="PDBsum" id="5U1C"/>
<dbReference type="PDBsum" id="6J8V"/>
<dbReference type="PDBsum" id="6J8W"/>
<dbReference type="PDBsum" id="6PUT"/>
<dbReference type="PDBsum" id="6PUW"/>
<dbReference type="PDBsum" id="6PUY"/>
<dbReference type="PDBsum" id="6PUZ"/>
<dbReference type="PDBsum" id="6V3K"/>
<dbReference type="PDBsum" id="6VOY"/>
<dbReference type="BMRB" id="P39476"/>
<dbReference type="SMR" id="P39476"/>
<dbReference type="STRING" id="273057.SSO10610"/>
<dbReference type="iPTMnet" id="P39476"/>
<dbReference type="PaxDb" id="273057-SSO10610"/>
<dbReference type="EnsemblBacteria" id="AAK42679">
    <property type="protein sequence ID" value="AAK42679"/>
    <property type="gene ID" value="SSO10610"/>
</dbReference>
<dbReference type="GeneID" id="44128276"/>
<dbReference type="KEGG" id="sso:SSO10610"/>
<dbReference type="PATRIC" id="fig|273057.12.peg.2631"/>
<dbReference type="eggNOG" id="arCOG05888">
    <property type="taxonomic scope" value="Archaea"/>
</dbReference>
<dbReference type="HOGENOM" id="CLU_2929990_0_0_2"/>
<dbReference type="InParanoid" id="P39476"/>
<dbReference type="BRENDA" id="1.8.99.B1">
    <property type="organism ID" value="6163"/>
</dbReference>
<dbReference type="EvolutionaryTrace" id="P39476"/>
<dbReference type="Proteomes" id="UP000001974">
    <property type="component" value="Chromosome"/>
</dbReference>
<dbReference type="GO" id="GO:0005737">
    <property type="term" value="C:cytoplasm"/>
    <property type="evidence" value="ECO:0007669"/>
    <property type="project" value="UniProtKB-SubCell"/>
</dbReference>
<dbReference type="GO" id="GO:0003677">
    <property type="term" value="F:DNA binding"/>
    <property type="evidence" value="ECO:0007669"/>
    <property type="project" value="UniProtKB-KW"/>
</dbReference>
<dbReference type="GO" id="GO:0004521">
    <property type="term" value="F:RNA endonuclease activity"/>
    <property type="evidence" value="ECO:0007669"/>
    <property type="project" value="InterPro"/>
</dbReference>
<dbReference type="Gene3D" id="2.40.50.40">
    <property type="match status" value="1"/>
</dbReference>
<dbReference type="InterPro" id="IPR016197">
    <property type="entry name" value="Chromo-like_dom_sf"/>
</dbReference>
<dbReference type="InterPro" id="IPR003212">
    <property type="entry name" value="DNA-bd_7a-e_arc"/>
</dbReference>
<dbReference type="NCBIfam" id="NF045555">
    <property type="entry name" value="Sul7d"/>
    <property type="match status" value="1"/>
</dbReference>
<dbReference type="Pfam" id="PF02294">
    <property type="entry name" value="7kD_DNA_binding"/>
    <property type="match status" value="1"/>
</dbReference>
<dbReference type="PIRSF" id="PIRSF036912">
    <property type="entry name" value="Sac7"/>
    <property type="match status" value="1"/>
</dbReference>
<dbReference type="SUPFAM" id="SSF54160">
    <property type="entry name" value="Chromo domain-like"/>
    <property type="match status" value="1"/>
</dbReference>
<feature type="initiator methionine" description="Removed" evidence="3 5 7 8 9">
    <location>
        <position position="1"/>
    </location>
</feature>
<feature type="chain" id="PRO_0000213078" description="DNA-binding protein 7d">
    <location>
        <begin position="2"/>
        <end position="64"/>
    </location>
</feature>
<feature type="modified residue" description="N6-methyllysine" evidence="5 9">
    <location>
        <position position="5"/>
    </location>
</feature>
<feature type="modified residue" description="N6-methyllysine" evidence="5 9">
    <location>
        <position position="7"/>
    </location>
</feature>
<feature type="modified residue" description="N6-methyllysine" evidence="5 9">
    <location>
        <position position="61"/>
    </location>
</feature>
<feature type="modified residue" description="N6-methyllysine" evidence="5 9">
    <location>
        <position position="63"/>
    </location>
</feature>
<feature type="modified residue" description="N6-methyllysine" evidence="5 9">
    <location>
        <position position="64"/>
    </location>
</feature>
<feature type="strand" evidence="12">
    <location>
        <begin position="3"/>
        <end position="7"/>
    </location>
</feature>
<feature type="strand" evidence="12">
    <location>
        <begin position="9"/>
        <end position="16"/>
    </location>
</feature>
<feature type="helix" evidence="12">
    <location>
        <begin position="17"/>
        <end position="19"/>
    </location>
</feature>
<feature type="strand" evidence="12">
    <location>
        <begin position="20"/>
        <end position="26"/>
    </location>
</feature>
<feature type="strand" evidence="12">
    <location>
        <begin position="29"/>
        <end position="35"/>
    </location>
</feature>
<feature type="helix" evidence="12">
    <location>
        <begin position="37"/>
        <end position="39"/>
    </location>
</feature>
<feature type="strand" evidence="12">
    <location>
        <begin position="41"/>
        <end position="48"/>
    </location>
</feature>
<feature type="helix" evidence="12">
    <location>
        <begin position="53"/>
        <end position="60"/>
    </location>
</feature>
<organism>
    <name type="scientific">Saccharolobus solfataricus (strain ATCC 35092 / DSM 1617 / JCM 11322 / P2)</name>
    <name type="common">Sulfolobus solfataricus</name>
    <dbReference type="NCBI Taxonomy" id="273057"/>
    <lineage>
        <taxon>Archaea</taxon>
        <taxon>Thermoproteota</taxon>
        <taxon>Thermoprotei</taxon>
        <taxon>Sulfolobales</taxon>
        <taxon>Sulfolobaceae</taxon>
        <taxon>Saccharolobus</taxon>
    </lineage>
</organism>
<gene>
    <name type="primary">sso7d</name>
    <name type="synonym">sso7d-1</name>
    <name type="ordered locus">SSO10610</name>
</gene>
<evidence type="ECO:0000250" key="1">
    <source>
        <dbReference type="UniProtKB" id="P61990"/>
    </source>
</evidence>
<evidence type="ECO:0000269" key="2">
    <source>
    </source>
</evidence>
<evidence type="ECO:0000269" key="3">
    <source>
    </source>
</evidence>
<evidence type="ECO:0000269" key="4">
    <source>
    </source>
</evidence>
<evidence type="ECO:0000269" key="5">
    <source>
    </source>
</evidence>
<evidence type="ECO:0000269" key="6">
    <source>
    </source>
</evidence>
<evidence type="ECO:0000269" key="7">
    <source>
    </source>
</evidence>
<evidence type="ECO:0000269" key="8">
    <source>
    </source>
</evidence>
<evidence type="ECO:0000269" key="9">
    <source>
    </source>
</evidence>
<evidence type="ECO:0000303" key="10">
    <source>
    </source>
</evidence>
<evidence type="ECO:0000305" key="11"/>
<evidence type="ECO:0007829" key="12">
    <source>
        <dbReference type="PDB" id="1C8C"/>
    </source>
</evidence>
<protein>
    <recommendedName>
        <fullName evidence="10">DNA-binding protein 7d</fullName>
    </recommendedName>
    <alternativeName>
        <fullName>7 kDa DNA-binding protein d</fullName>
    </alternativeName>
    <alternativeName>
        <fullName evidence="10">Sso7d</fullName>
    </alternativeName>
</protein>